<name>MTNA_BACAN</name>
<feature type="chain" id="PRO_0000357142" description="Methylthioribose-1-phosphate isomerase">
    <location>
        <begin position="1"/>
        <end position="351"/>
    </location>
</feature>
<feature type="active site" description="Proton donor" evidence="1">
    <location>
        <position position="240"/>
    </location>
</feature>
<feature type="binding site" evidence="1">
    <location>
        <begin position="51"/>
        <end position="53"/>
    </location>
    <ligand>
        <name>substrate</name>
    </ligand>
</feature>
<feature type="binding site" evidence="1">
    <location>
        <position position="94"/>
    </location>
    <ligand>
        <name>substrate</name>
    </ligand>
</feature>
<feature type="binding site" evidence="1">
    <location>
        <position position="199"/>
    </location>
    <ligand>
        <name>substrate</name>
    </ligand>
</feature>
<feature type="binding site" evidence="1">
    <location>
        <begin position="250"/>
        <end position="251"/>
    </location>
    <ligand>
        <name>substrate</name>
    </ligand>
</feature>
<feature type="site" description="Transition state stabilizer" evidence="1">
    <location>
        <position position="160"/>
    </location>
</feature>
<reference key="1">
    <citation type="journal article" date="2003" name="Nature">
        <title>The genome sequence of Bacillus anthracis Ames and comparison to closely related bacteria.</title>
        <authorList>
            <person name="Read T.D."/>
            <person name="Peterson S.N."/>
            <person name="Tourasse N.J."/>
            <person name="Baillie L.W."/>
            <person name="Paulsen I.T."/>
            <person name="Nelson K.E."/>
            <person name="Tettelin H."/>
            <person name="Fouts D.E."/>
            <person name="Eisen J.A."/>
            <person name="Gill S.R."/>
            <person name="Holtzapple E.K."/>
            <person name="Okstad O.A."/>
            <person name="Helgason E."/>
            <person name="Rilstone J."/>
            <person name="Wu M."/>
            <person name="Kolonay J.F."/>
            <person name="Beanan M.J."/>
            <person name="Dodson R.J."/>
            <person name="Brinkac L.M."/>
            <person name="Gwinn M.L."/>
            <person name="DeBoy R.T."/>
            <person name="Madpu R."/>
            <person name="Daugherty S.C."/>
            <person name="Durkin A.S."/>
            <person name="Haft D.H."/>
            <person name="Nelson W.C."/>
            <person name="Peterson J.D."/>
            <person name="Pop M."/>
            <person name="Khouri H.M."/>
            <person name="Radune D."/>
            <person name="Benton J.L."/>
            <person name="Mahamoud Y."/>
            <person name="Jiang L."/>
            <person name="Hance I.R."/>
            <person name="Weidman J.F."/>
            <person name="Berry K.J."/>
            <person name="Plaut R.D."/>
            <person name="Wolf A.M."/>
            <person name="Watkins K.L."/>
            <person name="Nierman W.C."/>
            <person name="Hazen A."/>
            <person name="Cline R.T."/>
            <person name="Redmond C."/>
            <person name="Thwaite J.E."/>
            <person name="White O."/>
            <person name="Salzberg S.L."/>
            <person name="Thomason B."/>
            <person name="Friedlander A.M."/>
            <person name="Koehler T.M."/>
            <person name="Hanna P.C."/>
            <person name="Kolstoe A.-B."/>
            <person name="Fraser C.M."/>
        </authorList>
    </citation>
    <scope>NUCLEOTIDE SEQUENCE [LARGE SCALE GENOMIC DNA]</scope>
    <source>
        <strain>Ames / isolate Porton</strain>
    </source>
</reference>
<reference key="2">
    <citation type="submission" date="2004-01" db="EMBL/GenBank/DDBJ databases">
        <title>Complete genome sequence of Bacillus anthracis Sterne.</title>
        <authorList>
            <person name="Brettin T.S."/>
            <person name="Bruce D."/>
            <person name="Challacombe J.F."/>
            <person name="Gilna P."/>
            <person name="Han C."/>
            <person name="Hill K."/>
            <person name="Hitchcock P."/>
            <person name="Jackson P."/>
            <person name="Keim P."/>
            <person name="Longmire J."/>
            <person name="Lucas S."/>
            <person name="Okinaka R."/>
            <person name="Richardson P."/>
            <person name="Rubin E."/>
            <person name="Tice H."/>
        </authorList>
    </citation>
    <scope>NUCLEOTIDE SEQUENCE [LARGE SCALE GENOMIC DNA]</scope>
    <source>
        <strain>Sterne</strain>
    </source>
</reference>
<reference key="3">
    <citation type="journal article" date="2009" name="J. Bacteriol.">
        <title>The complete genome sequence of Bacillus anthracis Ames 'Ancestor'.</title>
        <authorList>
            <person name="Ravel J."/>
            <person name="Jiang L."/>
            <person name="Stanley S.T."/>
            <person name="Wilson M.R."/>
            <person name="Decker R.S."/>
            <person name="Read T.D."/>
            <person name="Worsham P."/>
            <person name="Keim P.S."/>
            <person name="Salzberg S.L."/>
            <person name="Fraser-Liggett C.M."/>
            <person name="Rasko D.A."/>
        </authorList>
    </citation>
    <scope>NUCLEOTIDE SEQUENCE [LARGE SCALE GENOMIC DNA]</scope>
    <source>
        <strain>Ames ancestor</strain>
    </source>
</reference>
<gene>
    <name evidence="1" type="primary">mtnA</name>
    <name type="ordered locus">BA_4251</name>
    <name type="ordered locus">GBAA_4251</name>
    <name type="ordered locus">BAS3942</name>
</gene>
<dbReference type="EC" id="5.3.1.23" evidence="1"/>
<dbReference type="EMBL" id="AE016879">
    <property type="protein sequence ID" value="AAP27972.1"/>
    <property type="molecule type" value="Genomic_DNA"/>
</dbReference>
<dbReference type="EMBL" id="AE017334">
    <property type="protein sequence ID" value="AAT33368.1"/>
    <property type="molecule type" value="Genomic_DNA"/>
</dbReference>
<dbReference type="EMBL" id="AE017225">
    <property type="protein sequence ID" value="AAT56243.1"/>
    <property type="molecule type" value="Genomic_DNA"/>
</dbReference>
<dbReference type="RefSeq" id="NP_846486.1">
    <property type="nucleotide sequence ID" value="NC_003997.3"/>
</dbReference>
<dbReference type="RefSeq" id="WP_000109046.1">
    <property type="nucleotide sequence ID" value="NZ_WXXJ01000027.1"/>
</dbReference>
<dbReference type="RefSeq" id="YP_030192.1">
    <property type="nucleotide sequence ID" value="NC_005945.1"/>
</dbReference>
<dbReference type="SMR" id="Q81MJ6"/>
<dbReference type="STRING" id="261594.GBAA_4251"/>
<dbReference type="DNASU" id="1088920"/>
<dbReference type="GeneID" id="45023922"/>
<dbReference type="KEGG" id="ban:BA_4251"/>
<dbReference type="KEGG" id="banh:HYU01_20770"/>
<dbReference type="KEGG" id="bar:GBAA_4251"/>
<dbReference type="KEGG" id="bat:BAS3942"/>
<dbReference type="PATRIC" id="fig|198094.11.peg.4221"/>
<dbReference type="eggNOG" id="COG0182">
    <property type="taxonomic scope" value="Bacteria"/>
</dbReference>
<dbReference type="HOGENOM" id="CLU_016218_1_2_9"/>
<dbReference type="OMA" id="CETRPLN"/>
<dbReference type="OrthoDB" id="9803436at2"/>
<dbReference type="UniPathway" id="UPA00904">
    <property type="reaction ID" value="UER00874"/>
</dbReference>
<dbReference type="Proteomes" id="UP000000427">
    <property type="component" value="Chromosome"/>
</dbReference>
<dbReference type="Proteomes" id="UP000000594">
    <property type="component" value="Chromosome"/>
</dbReference>
<dbReference type="GO" id="GO:0046523">
    <property type="term" value="F:S-methyl-5-thioribose-1-phosphate isomerase activity"/>
    <property type="evidence" value="ECO:0007669"/>
    <property type="project" value="UniProtKB-UniRule"/>
</dbReference>
<dbReference type="GO" id="GO:0019509">
    <property type="term" value="P:L-methionine salvage from methylthioadenosine"/>
    <property type="evidence" value="ECO:0007669"/>
    <property type="project" value="UniProtKB-UniRule"/>
</dbReference>
<dbReference type="FunFam" id="1.20.120.420:FF:000005">
    <property type="entry name" value="Methylthioribose-1-phosphate isomerase"/>
    <property type="match status" value="1"/>
</dbReference>
<dbReference type="FunFam" id="3.40.50.10470:FF:000006">
    <property type="entry name" value="Methylthioribose-1-phosphate isomerase"/>
    <property type="match status" value="1"/>
</dbReference>
<dbReference type="Gene3D" id="1.20.120.420">
    <property type="entry name" value="translation initiation factor eif-2b, domain 1"/>
    <property type="match status" value="1"/>
</dbReference>
<dbReference type="Gene3D" id="3.40.50.10470">
    <property type="entry name" value="Translation initiation factor eif-2b, domain 2"/>
    <property type="match status" value="1"/>
</dbReference>
<dbReference type="HAMAP" id="MF_01678">
    <property type="entry name" value="Salvage_MtnA"/>
    <property type="match status" value="1"/>
</dbReference>
<dbReference type="InterPro" id="IPR000649">
    <property type="entry name" value="IF-2B-related"/>
</dbReference>
<dbReference type="InterPro" id="IPR005251">
    <property type="entry name" value="IF-M1Pi"/>
</dbReference>
<dbReference type="InterPro" id="IPR042529">
    <property type="entry name" value="IF_2B-like_C"/>
</dbReference>
<dbReference type="InterPro" id="IPR011559">
    <property type="entry name" value="Initiation_fac_2B_a/b/d"/>
</dbReference>
<dbReference type="InterPro" id="IPR027363">
    <property type="entry name" value="M1Pi_N"/>
</dbReference>
<dbReference type="InterPro" id="IPR037171">
    <property type="entry name" value="NagB/RpiA_transferase-like"/>
</dbReference>
<dbReference type="NCBIfam" id="TIGR00524">
    <property type="entry name" value="eIF-2B_rel"/>
    <property type="match status" value="1"/>
</dbReference>
<dbReference type="NCBIfam" id="NF004326">
    <property type="entry name" value="PRK05720.1"/>
    <property type="match status" value="1"/>
</dbReference>
<dbReference type="NCBIfam" id="TIGR00512">
    <property type="entry name" value="salvage_mtnA"/>
    <property type="match status" value="1"/>
</dbReference>
<dbReference type="PANTHER" id="PTHR43475">
    <property type="entry name" value="METHYLTHIORIBOSE-1-PHOSPHATE ISOMERASE"/>
    <property type="match status" value="1"/>
</dbReference>
<dbReference type="PANTHER" id="PTHR43475:SF4">
    <property type="entry name" value="METHYLTHIORIBOSE-1-PHOSPHATE ISOMERASE"/>
    <property type="match status" value="1"/>
</dbReference>
<dbReference type="Pfam" id="PF01008">
    <property type="entry name" value="IF-2B"/>
    <property type="match status" value="1"/>
</dbReference>
<dbReference type="SUPFAM" id="SSF100950">
    <property type="entry name" value="NagB/RpiA/CoA transferase-like"/>
    <property type="match status" value="1"/>
</dbReference>
<protein>
    <recommendedName>
        <fullName evidence="1">Methylthioribose-1-phosphate isomerase</fullName>
        <shortName evidence="1">M1Pi</shortName>
        <shortName evidence="1">MTR-1-P isomerase</shortName>
        <ecNumber evidence="1">5.3.1.23</ecNumber>
    </recommendedName>
    <alternativeName>
        <fullName evidence="1">S-methyl-5-thioribose-1-phosphate isomerase</fullName>
    </alternativeName>
</protein>
<proteinExistence type="inferred from homology"/>
<organism>
    <name type="scientific">Bacillus anthracis</name>
    <dbReference type="NCBI Taxonomy" id="1392"/>
    <lineage>
        <taxon>Bacteria</taxon>
        <taxon>Bacillati</taxon>
        <taxon>Bacillota</taxon>
        <taxon>Bacilli</taxon>
        <taxon>Bacillales</taxon>
        <taxon>Bacillaceae</taxon>
        <taxon>Bacillus</taxon>
        <taxon>Bacillus cereus group</taxon>
    </lineage>
</organism>
<accession>Q81MJ6</accession>
<accession>Q6HTZ6</accession>
<accession>Q6KN76</accession>
<comment type="function">
    <text evidence="1">Catalyzes the interconversion of methylthioribose-1-phosphate (MTR-1-P) into methylthioribulose-1-phosphate (MTRu-1-P).</text>
</comment>
<comment type="catalytic activity">
    <reaction evidence="1">
        <text>5-(methylsulfanyl)-alpha-D-ribose 1-phosphate = 5-(methylsulfanyl)-D-ribulose 1-phosphate</text>
        <dbReference type="Rhea" id="RHEA:19989"/>
        <dbReference type="ChEBI" id="CHEBI:58533"/>
        <dbReference type="ChEBI" id="CHEBI:58548"/>
        <dbReference type="EC" id="5.3.1.23"/>
    </reaction>
</comment>
<comment type="pathway">
    <text evidence="1">Amino-acid biosynthesis; L-methionine biosynthesis via salvage pathway; L-methionine from S-methyl-5-thio-alpha-D-ribose 1-phosphate: step 1/6.</text>
</comment>
<comment type="subunit">
    <text evidence="1">Homodimer.</text>
</comment>
<comment type="similarity">
    <text evidence="1">Belongs to the EIF-2B alpha/beta/delta subunits family. MtnA subfamily.</text>
</comment>
<evidence type="ECO:0000255" key="1">
    <source>
        <dbReference type="HAMAP-Rule" id="MF_01678"/>
    </source>
</evidence>
<keyword id="KW-0028">Amino-acid biosynthesis</keyword>
<keyword id="KW-0413">Isomerase</keyword>
<keyword id="KW-0486">Methionine biosynthesis</keyword>
<keyword id="KW-1185">Reference proteome</keyword>
<sequence length="351" mass="38675">MSTVVRIPRSVSWKGDAIAVLNQTKLPHSTEYKTLTTIEEVWKSIVMLEVRGAPAIGIVAAFGLALASKKYTTLHIEEFQKKFNRDCNYLGTSRPTAVNLFWAIDRMRESIQEITTIKEAQKILEEEALRIQQEDEAVCRSIGEHALTCFKDGDNILTICNAGSIATARYGTALAPFYIGKEKGVRLHAYACETRPVLQGGRLTTWELKQAGIDVTLITDNTAAHAIQTKEISAIIVGADRIVANGDTANKIGTMNLAILAKYFDIPFYVAAPLSTFDITKQTGAEIVIEERDETEVTKIFGKQVAPVGTTVYNPAFDVTPNELITGIITEKGIIRGDYKREIASLFKKTS</sequence>